<gene>
    <name evidence="1" type="primary">clpX</name>
    <name type="ordered locus">Xaut_3592</name>
</gene>
<protein>
    <recommendedName>
        <fullName evidence="1">ATP-dependent Clp protease ATP-binding subunit ClpX</fullName>
    </recommendedName>
</protein>
<proteinExistence type="inferred from homology"/>
<organism>
    <name type="scientific">Xanthobacter autotrophicus (strain ATCC BAA-1158 / Py2)</name>
    <dbReference type="NCBI Taxonomy" id="78245"/>
    <lineage>
        <taxon>Bacteria</taxon>
        <taxon>Pseudomonadati</taxon>
        <taxon>Pseudomonadota</taxon>
        <taxon>Alphaproteobacteria</taxon>
        <taxon>Hyphomicrobiales</taxon>
        <taxon>Xanthobacteraceae</taxon>
        <taxon>Xanthobacter</taxon>
    </lineage>
</organism>
<keyword id="KW-0067">ATP-binding</keyword>
<keyword id="KW-0143">Chaperone</keyword>
<keyword id="KW-0479">Metal-binding</keyword>
<keyword id="KW-0547">Nucleotide-binding</keyword>
<keyword id="KW-1185">Reference proteome</keyword>
<keyword id="KW-0862">Zinc</keyword>
<dbReference type="EMBL" id="CP000781">
    <property type="protein sequence ID" value="ABS68820.1"/>
    <property type="molecule type" value="Genomic_DNA"/>
</dbReference>
<dbReference type="SMR" id="A7ILC7"/>
<dbReference type="STRING" id="78245.Xaut_3592"/>
<dbReference type="KEGG" id="xau:Xaut_3592"/>
<dbReference type="eggNOG" id="COG1219">
    <property type="taxonomic scope" value="Bacteria"/>
</dbReference>
<dbReference type="HOGENOM" id="CLU_014218_8_2_5"/>
<dbReference type="OrthoDB" id="9804062at2"/>
<dbReference type="PhylomeDB" id="A7ILC7"/>
<dbReference type="Proteomes" id="UP000002417">
    <property type="component" value="Chromosome"/>
</dbReference>
<dbReference type="GO" id="GO:0009376">
    <property type="term" value="C:HslUV protease complex"/>
    <property type="evidence" value="ECO:0007669"/>
    <property type="project" value="TreeGrafter"/>
</dbReference>
<dbReference type="GO" id="GO:0005524">
    <property type="term" value="F:ATP binding"/>
    <property type="evidence" value="ECO:0007669"/>
    <property type="project" value="UniProtKB-UniRule"/>
</dbReference>
<dbReference type="GO" id="GO:0016887">
    <property type="term" value="F:ATP hydrolysis activity"/>
    <property type="evidence" value="ECO:0007669"/>
    <property type="project" value="InterPro"/>
</dbReference>
<dbReference type="GO" id="GO:0140662">
    <property type="term" value="F:ATP-dependent protein folding chaperone"/>
    <property type="evidence" value="ECO:0007669"/>
    <property type="project" value="InterPro"/>
</dbReference>
<dbReference type="GO" id="GO:0046983">
    <property type="term" value="F:protein dimerization activity"/>
    <property type="evidence" value="ECO:0007669"/>
    <property type="project" value="InterPro"/>
</dbReference>
<dbReference type="GO" id="GO:0051082">
    <property type="term" value="F:unfolded protein binding"/>
    <property type="evidence" value="ECO:0007669"/>
    <property type="project" value="UniProtKB-UniRule"/>
</dbReference>
<dbReference type="GO" id="GO:0008270">
    <property type="term" value="F:zinc ion binding"/>
    <property type="evidence" value="ECO:0007669"/>
    <property type="project" value="InterPro"/>
</dbReference>
<dbReference type="GO" id="GO:0051301">
    <property type="term" value="P:cell division"/>
    <property type="evidence" value="ECO:0007669"/>
    <property type="project" value="TreeGrafter"/>
</dbReference>
<dbReference type="GO" id="GO:0051603">
    <property type="term" value="P:proteolysis involved in protein catabolic process"/>
    <property type="evidence" value="ECO:0007669"/>
    <property type="project" value="TreeGrafter"/>
</dbReference>
<dbReference type="CDD" id="cd19497">
    <property type="entry name" value="RecA-like_ClpX"/>
    <property type="match status" value="1"/>
</dbReference>
<dbReference type="FunFam" id="1.10.8.60:FF:000002">
    <property type="entry name" value="ATP-dependent Clp protease ATP-binding subunit ClpX"/>
    <property type="match status" value="1"/>
</dbReference>
<dbReference type="FunFam" id="3.40.50.300:FF:000005">
    <property type="entry name" value="ATP-dependent Clp protease ATP-binding subunit ClpX"/>
    <property type="match status" value="1"/>
</dbReference>
<dbReference type="Gene3D" id="1.10.8.60">
    <property type="match status" value="1"/>
</dbReference>
<dbReference type="Gene3D" id="6.20.220.10">
    <property type="entry name" value="ClpX chaperone, C4-type zinc finger domain"/>
    <property type="match status" value="1"/>
</dbReference>
<dbReference type="Gene3D" id="3.40.50.300">
    <property type="entry name" value="P-loop containing nucleotide triphosphate hydrolases"/>
    <property type="match status" value="1"/>
</dbReference>
<dbReference type="HAMAP" id="MF_00175">
    <property type="entry name" value="ClpX"/>
    <property type="match status" value="1"/>
</dbReference>
<dbReference type="InterPro" id="IPR003593">
    <property type="entry name" value="AAA+_ATPase"/>
</dbReference>
<dbReference type="InterPro" id="IPR050052">
    <property type="entry name" value="ATP-dep_Clp_protease_ClpX"/>
</dbReference>
<dbReference type="InterPro" id="IPR003959">
    <property type="entry name" value="ATPase_AAA_core"/>
</dbReference>
<dbReference type="InterPro" id="IPR019489">
    <property type="entry name" value="Clp_ATPase_C"/>
</dbReference>
<dbReference type="InterPro" id="IPR004487">
    <property type="entry name" value="Clp_protease_ATP-bd_su_ClpX"/>
</dbReference>
<dbReference type="InterPro" id="IPR046425">
    <property type="entry name" value="ClpX_bact"/>
</dbReference>
<dbReference type="InterPro" id="IPR027417">
    <property type="entry name" value="P-loop_NTPase"/>
</dbReference>
<dbReference type="InterPro" id="IPR010603">
    <property type="entry name" value="Znf_CppX_C4"/>
</dbReference>
<dbReference type="InterPro" id="IPR038366">
    <property type="entry name" value="Znf_CppX_C4_sf"/>
</dbReference>
<dbReference type="NCBIfam" id="TIGR00382">
    <property type="entry name" value="clpX"/>
    <property type="match status" value="1"/>
</dbReference>
<dbReference type="NCBIfam" id="NF003745">
    <property type="entry name" value="PRK05342.1"/>
    <property type="match status" value="1"/>
</dbReference>
<dbReference type="PANTHER" id="PTHR48102:SF7">
    <property type="entry name" value="ATP-DEPENDENT CLP PROTEASE ATP-BINDING SUBUNIT CLPX-LIKE, MITOCHONDRIAL"/>
    <property type="match status" value="1"/>
</dbReference>
<dbReference type="PANTHER" id="PTHR48102">
    <property type="entry name" value="ATP-DEPENDENT CLP PROTEASE ATP-BINDING SUBUNIT CLPX-LIKE, MITOCHONDRIAL-RELATED"/>
    <property type="match status" value="1"/>
</dbReference>
<dbReference type="Pfam" id="PF07724">
    <property type="entry name" value="AAA_2"/>
    <property type="match status" value="1"/>
</dbReference>
<dbReference type="Pfam" id="PF10431">
    <property type="entry name" value="ClpB_D2-small"/>
    <property type="match status" value="1"/>
</dbReference>
<dbReference type="Pfam" id="PF06689">
    <property type="entry name" value="zf-C4_ClpX"/>
    <property type="match status" value="1"/>
</dbReference>
<dbReference type="SMART" id="SM00382">
    <property type="entry name" value="AAA"/>
    <property type="match status" value="1"/>
</dbReference>
<dbReference type="SMART" id="SM01086">
    <property type="entry name" value="ClpB_D2-small"/>
    <property type="match status" value="1"/>
</dbReference>
<dbReference type="SMART" id="SM00994">
    <property type="entry name" value="zf-C4_ClpX"/>
    <property type="match status" value="1"/>
</dbReference>
<dbReference type="SUPFAM" id="SSF57716">
    <property type="entry name" value="Glucocorticoid receptor-like (DNA-binding domain)"/>
    <property type="match status" value="1"/>
</dbReference>
<dbReference type="SUPFAM" id="SSF52540">
    <property type="entry name" value="P-loop containing nucleoside triphosphate hydrolases"/>
    <property type="match status" value="1"/>
</dbReference>
<dbReference type="PROSITE" id="PS51902">
    <property type="entry name" value="CLPX_ZB"/>
    <property type="match status" value="1"/>
</dbReference>
<comment type="function">
    <text evidence="1">ATP-dependent specificity component of the Clp protease. It directs the protease to specific substrates. Can perform chaperone functions in the absence of ClpP.</text>
</comment>
<comment type="subunit">
    <text evidence="1">Component of the ClpX-ClpP complex. Forms a hexameric ring that, in the presence of ATP, binds to fourteen ClpP subunits assembled into a disk-like structure with a central cavity, resembling the structure of eukaryotic proteasomes.</text>
</comment>
<comment type="similarity">
    <text evidence="1">Belongs to the ClpX chaperone family.</text>
</comment>
<feature type="chain" id="PRO_1000098018" description="ATP-dependent Clp protease ATP-binding subunit ClpX">
    <location>
        <begin position="1"/>
        <end position="422"/>
    </location>
</feature>
<feature type="domain" description="ClpX-type ZB" evidence="2">
    <location>
        <begin position="3"/>
        <end position="56"/>
    </location>
</feature>
<feature type="binding site" evidence="2">
    <location>
        <position position="15"/>
    </location>
    <ligand>
        <name>Zn(2+)</name>
        <dbReference type="ChEBI" id="CHEBI:29105"/>
    </ligand>
</feature>
<feature type="binding site" evidence="2">
    <location>
        <position position="18"/>
    </location>
    <ligand>
        <name>Zn(2+)</name>
        <dbReference type="ChEBI" id="CHEBI:29105"/>
    </ligand>
</feature>
<feature type="binding site" evidence="2">
    <location>
        <position position="37"/>
    </location>
    <ligand>
        <name>Zn(2+)</name>
        <dbReference type="ChEBI" id="CHEBI:29105"/>
    </ligand>
</feature>
<feature type="binding site" evidence="2">
    <location>
        <position position="40"/>
    </location>
    <ligand>
        <name>Zn(2+)</name>
        <dbReference type="ChEBI" id="CHEBI:29105"/>
    </ligand>
</feature>
<feature type="binding site" evidence="1">
    <location>
        <begin position="119"/>
        <end position="126"/>
    </location>
    <ligand>
        <name>ATP</name>
        <dbReference type="ChEBI" id="CHEBI:30616"/>
    </ligand>
</feature>
<accession>A7ILC7</accession>
<reference key="1">
    <citation type="submission" date="2007-07" db="EMBL/GenBank/DDBJ databases">
        <title>Complete sequence of chromosome of Xanthobacter autotrophicus Py2.</title>
        <authorList>
            <consortium name="US DOE Joint Genome Institute"/>
            <person name="Copeland A."/>
            <person name="Lucas S."/>
            <person name="Lapidus A."/>
            <person name="Barry K."/>
            <person name="Glavina del Rio T."/>
            <person name="Hammon N."/>
            <person name="Israni S."/>
            <person name="Dalin E."/>
            <person name="Tice H."/>
            <person name="Pitluck S."/>
            <person name="Sims D."/>
            <person name="Brettin T."/>
            <person name="Bruce D."/>
            <person name="Detter J.C."/>
            <person name="Han C."/>
            <person name="Tapia R."/>
            <person name="Brainard J."/>
            <person name="Schmutz J."/>
            <person name="Larimer F."/>
            <person name="Land M."/>
            <person name="Hauser L."/>
            <person name="Kyrpides N."/>
            <person name="Kim E."/>
            <person name="Ensigns S.A."/>
            <person name="Richardson P."/>
        </authorList>
    </citation>
    <scope>NUCLEOTIDE SEQUENCE [LARGE SCALE GENOMIC DNA]</scope>
    <source>
        <strain>ATCC BAA-1158 / Py2</strain>
    </source>
</reference>
<name>CLPX_XANP2</name>
<evidence type="ECO:0000255" key="1">
    <source>
        <dbReference type="HAMAP-Rule" id="MF_00175"/>
    </source>
</evidence>
<evidence type="ECO:0000255" key="2">
    <source>
        <dbReference type="PROSITE-ProRule" id="PRU01250"/>
    </source>
</evidence>
<sequence>MSKTGGSDSKNTLYCSFCGKSQHEVRKLIAGPTVFICDECVELCMDIIREESKSSLVKSRDGIPTPKEIRKVLDDYVIGQDHAKKVLSVAVHNHYKRLNHATKHGDVELAKSNILLIGPTGSGKTLLAQTLARILDVPFTMADATTLTEAGYVGEDVENIILKLLQAADYNVERAQRGIVYIDEIDKISRKSDNPSITRDVSGEGVQQALLKIMEGTVASVPPQGGRKHPQQEFLQVDTTNILFICGGAFAGLDKIISSRSKGSTSIGFQAKVAPPEDRRPGEVFREVEPEDLLKYGLIPEFIGRLPVLATLGDLDEEALKKILSEPKNALVKQYQRLFEMENVDLTIHEEALGAIARKAIERKTGARGLRSIMESILLDTMFDLPGLEGVEEVVISREVVEQSARPLYIYADRVGDAGASA</sequence>